<reference key="1">
    <citation type="journal article" date="2010" name="Gene">
        <title>HLA-B62 as a possible ligand for the human homologue of mouse macrophage MHC receptor 2 (MMR2) on monocytes.</title>
        <authorList>
            <person name="Shimizu T."/>
            <person name="Tashiro-Yamaji J."/>
            <person name="Hayashi M."/>
            <person name="Inoue Y."/>
            <person name="Ibata M."/>
            <person name="Kubota T."/>
            <person name="Tanigawa N."/>
            <person name="Yoshida R."/>
        </authorList>
    </citation>
    <scope>NUCLEOTIDE SEQUENCE [MRNA]</scope>
    <scope>VARIANT GLY-205</scope>
    <scope>INTERACTION WITH HLA-B62</scope>
    <scope>TISSUE SPECIFICITY</scope>
    <source>
        <tissue>Brain</tissue>
    </source>
</reference>
<reference key="2">
    <citation type="journal article" date="2004" name="Nat. Genet.">
        <title>Complete sequencing and characterization of 21,243 full-length human cDNAs.</title>
        <authorList>
            <person name="Ota T."/>
            <person name="Suzuki Y."/>
            <person name="Nishikawa T."/>
            <person name="Otsuki T."/>
            <person name="Sugiyama T."/>
            <person name="Irie R."/>
            <person name="Wakamatsu A."/>
            <person name="Hayashi K."/>
            <person name="Sato H."/>
            <person name="Nagai K."/>
            <person name="Kimura K."/>
            <person name="Makita H."/>
            <person name="Sekine M."/>
            <person name="Obayashi M."/>
            <person name="Nishi T."/>
            <person name="Shibahara T."/>
            <person name="Tanaka T."/>
            <person name="Ishii S."/>
            <person name="Yamamoto J."/>
            <person name="Saito K."/>
            <person name="Kawai Y."/>
            <person name="Isono Y."/>
            <person name="Nakamura Y."/>
            <person name="Nagahari K."/>
            <person name="Murakami K."/>
            <person name="Yasuda T."/>
            <person name="Iwayanagi T."/>
            <person name="Wagatsuma M."/>
            <person name="Shiratori A."/>
            <person name="Sudo H."/>
            <person name="Hosoiri T."/>
            <person name="Kaku Y."/>
            <person name="Kodaira H."/>
            <person name="Kondo H."/>
            <person name="Sugawara M."/>
            <person name="Takahashi M."/>
            <person name="Kanda K."/>
            <person name="Yokoi T."/>
            <person name="Furuya T."/>
            <person name="Kikkawa E."/>
            <person name="Omura Y."/>
            <person name="Abe K."/>
            <person name="Kamihara K."/>
            <person name="Katsuta N."/>
            <person name="Sato K."/>
            <person name="Tanikawa M."/>
            <person name="Yamazaki M."/>
            <person name="Ninomiya K."/>
            <person name="Ishibashi T."/>
            <person name="Yamashita H."/>
            <person name="Murakawa K."/>
            <person name="Fujimori K."/>
            <person name="Tanai H."/>
            <person name="Kimata M."/>
            <person name="Watanabe M."/>
            <person name="Hiraoka S."/>
            <person name="Chiba Y."/>
            <person name="Ishida S."/>
            <person name="Ono Y."/>
            <person name="Takiguchi S."/>
            <person name="Watanabe S."/>
            <person name="Yosida M."/>
            <person name="Hotuta T."/>
            <person name="Kusano J."/>
            <person name="Kanehori K."/>
            <person name="Takahashi-Fujii A."/>
            <person name="Hara H."/>
            <person name="Tanase T.-O."/>
            <person name="Nomura Y."/>
            <person name="Togiya S."/>
            <person name="Komai F."/>
            <person name="Hara R."/>
            <person name="Takeuchi K."/>
            <person name="Arita M."/>
            <person name="Imose N."/>
            <person name="Musashino K."/>
            <person name="Yuuki H."/>
            <person name="Oshima A."/>
            <person name="Sasaki N."/>
            <person name="Aotsuka S."/>
            <person name="Yoshikawa Y."/>
            <person name="Matsunawa H."/>
            <person name="Ichihara T."/>
            <person name="Shiohata N."/>
            <person name="Sano S."/>
            <person name="Moriya S."/>
            <person name="Momiyama H."/>
            <person name="Satoh N."/>
            <person name="Takami S."/>
            <person name="Terashima Y."/>
            <person name="Suzuki O."/>
            <person name="Nakagawa S."/>
            <person name="Senoh A."/>
            <person name="Mizoguchi H."/>
            <person name="Goto Y."/>
            <person name="Shimizu F."/>
            <person name="Wakebe H."/>
            <person name="Hishigaki H."/>
            <person name="Watanabe T."/>
            <person name="Sugiyama A."/>
            <person name="Takemoto M."/>
            <person name="Kawakami B."/>
            <person name="Yamazaki M."/>
            <person name="Watanabe K."/>
            <person name="Kumagai A."/>
            <person name="Itakura S."/>
            <person name="Fukuzumi Y."/>
            <person name="Fujimori Y."/>
            <person name="Komiyama M."/>
            <person name="Tashiro H."/>
            <person name="Tanigami A."/>
            <person name="Fujiwara T."/>
            <person name="Ono T."/>
            <person name="Yamada K."/>
            <person name="Fujii Y."/>
            <person name="Ozaki K."/>
            <person name="Hirao M."/>
            <person name="Ohmori Y."/>
            <person name="Kawabata A."/>
            <person name="Hikiji T."/>
            <person name="Kobatake N."/>
            <person name="Inagaki H."/>
            <person name="Ikema Y."/>
            <person name="Okamoto S."/>
            <person name="Okitani R."/>
            <person name="Kawakami T."/>
            <person name="Noguchi S."/>
            <person name="Itoh T."/>
            <person name="Shigeta K."/>
            <person name="Senba T."/>
            <person name="Matsumura K."/>
            <person name="Nakajima Y."/>
            <person name="Mizuno T."/>
            <person name="Morinaga M."/>
            <person name="Sasaki M."/>
            <person name="Togashi T."/>
            <person name="Oyama M."/>
            <person name="Hata H."/>
            <person name="Watanabe M."/>
            <person name="Komatsu T."/>
            <person name="Mizushima-Sugano J."/>
            <person name="Satoh T."/>
            <person name="Shirai Y."/>
            <person name="Takahashi Y."/>
            <person name="Nakagawa K."/>
            <person name="Okumura K."/>
            <person name="Nagase T."/>
            <person name="Nomura N."/>
            <person name="Kikuchi H."/>
            <person name="Masuho Y."/>
            <person name="Yamashita R."/>
            <person name="Nakai K."/>
            <person name="Yada T."/>
            <person name="Nakamura Y."/>
            <person name="Ohara O."/>
            <person name="Isogai T."/>
            <person name="Sugano S."/>
        </authorList>
    </citation>
    <scope>NUCLEOTIDE SEQUENCE [LARGE SCALE MRNA]</scope>
    <scope>VARIANT GLY-205</scope>
    <source>
        <tissue>Colon</tissue>
        <tissue>Corpus callosum</tissue>
    </source>
</reference>
<reference key="3">
    <citation type="journal article" date="2005" name="Nature">
        <title>Generation and annotation of the DNA sequences of human chromosomes 2 and 4.</title>
        <authorList>
            <person name="Hillier L.W."/>
            <person name="Graves T.A."/>
            <person name="Fulton R.S."/>
            <person name="Fulton L.A."/>
            <person name="Pepin K.H."/>
            <person name="Minx P."/>
            <person name="Wagner-McPherson C."/>
            <person name="Layman D."/>
            <person name="Wylie K."/>
            <person name="Sekhon M."/>
            <person name="Becker M.C."/>
            <person name="Fewell G.A."/>
            <person name="Delehaunty K.D."/>
            <person name="Miner T.L."/>
            <person name="Nash W.E."/>
            <person name="Kremitzki C."/>
            <person name="Oddy L."/>
            <person name="Du H."/>
            <person name="Sun H."/>
            <person name="Bradshaw-Cordum H."/>
            <person name="Ali J."/>
            <person name="Carter J."/>
            <person name="Cordes M."/>
            <person name="Harris A."/>
            <person name="Isak A."/>
            <person name="van Brunt A."/>
            <person name="Nguyen C."/>
            <person name="Du F."/>
            <person name="Courtney L."/>
            <person name="Kalicki J."/>
            <person name="Ozersky P."/>
            <person name="Abbott S."/>
            <person name="Armstrong J."/>
            <person name="Belter E.A."/>
            <person name="Caruso L."/>
            <person name="Cedroni M."/>
            <person name="Cotton M."/>
            <person name="Davidson T."/>
            <person name="Desai A."/>
            <person name="Elliott G."/>
            <person name="Erb T."/>
            <person name="Fronick C."/>
            <person name="Gaige T."/>
            <person name="Haakenson W."/>
            <person name="Haglund K."/>
            <person name="Holmes A."/>
            <person name="Harkins R."/>
            <person name="Kim K."/>
            <person name="Kruchowski S.S."/>
            <person name="Strong C.M."/>
            <person name="Grewal N."/>
            <person name="Goyea E."/>
            <person name="Hou S."/>
            <person name="Levy A."/>
            <person name="Martinka S."/>
            <person name="Mead K."/>
            <person name="McLellan M.D."/>
            <person name="Meyer R."/>
            <person name="Randall-Maher J."/>
            <person name="Tomlinson C."/>
            <person name="Dauphin-Kohlberg S."/>
            <person name="Kozlowicz-Reilly A."/>
            <person name="Shah N."/>
            <person name="Swearengen-Shahid S."/>
            <person name="Snider J."/>
            <person name="Strong J.T."/>
            <person name="Thompson J."/>
            <person name="Yoakum M."/>
            <person name="Leonard S."/>
            <person name="Pearman C."/>
            <person name="Trani L."/>
            <person name="Radionenko M."/>
            <person name="Waligorski J.E."/>
            <person name="Wang C."/>
            <person name="Rock S.M."/>
            <person name="Tin-Wollam A.-M."/>
            <person name="Maupin R."/>
            <person name="Latreille P."/>
            <person name="Wendl M.C."/>
            <person name="Yang S.-P."/>
            <person name="Pohl C."/>
            <person name="Wallis J.W."/>
            <person name="Spieth J."/>
            <person name="Bieri T.A."/>
            <person name="Berkowicz N."/>
            <person name="Nelson J.O."/>
            <person name="Osborne J."/>
            <person name="Ding L."/>
            <person name="Meyer R."/>
            <person name="Sabo A."/>
            <person name="Shotland Y."/>
            <person name="Sinha P."/>
            <person name="Wohldmann P.E."/>
            <person name="Cook L.L."/>
            <person name="Hickenbotham M.T."/>
            <person name="Eldred J."/>
            <person name="Williams D."/>
            <person name="Jones T.A."/>
            <person name="She X."/>
            <person name="Ciccarelli F.D."/>
            <person name="Izaurralde E."/>
            <person name="Taylor J."/>
            <person name="Schmutz J."/>
            <person name="Myers R.M."/>
            <person name="Cox D.R."/>
            <person name="Huang X."/>
            <person name="McPherson J.D."/>
            <person name="Mardis E.R."/>
            <person name="Clifton S.W."/>
            <person name="Warren W.C."/>
            <person name="Chinwalla A.T."/>
            <person name="Eddy S.R."/>
            <person name="Marra M.A."/>
            <person name="Ovcharenko I."/>
            <person name="Furey T.S."/>
            <person name="Miller W."/>
            <person name="Eichler E.E."/>
            <person name="Bork P."/>
            <person name="Suyama M."/>
            <person name="Torrents D."/>
            <person name="Waterston R.H."/>
            <person name="Wilson R.K."/>
        </authorList>
    </citation>
    <scope>NUCLEOTIDE SEQUENCE [LARGE SCALE GENOMIC DNA]</scope>
</reference>
<reference key="4">
    <citation type="submission" date="2005-09" db="EMBL/GenBank/DDBJ databases">
        <authorList>
            <person name="Mural R.J."/>
            <person name="Istrail S."/>
            <person name="Sutton G.G."/>
            <person name="Florea L."/>
            <person name="Halpern A.L."/>
            <person name="Mobarry C.M."/>
            <person name="Lippert R."/>
            <person name="Walenz B."/>
            <person name="Shatkay H."/>
            <person name="Dew I."/>
            <person name="Miller J.R."/>
            <person name="Flanigan M.J."/>
            <person name="Edwards N.J."/>
            <person name="Bolanos R."/>
            <person name="Fasulo D."/>
            <person name="Halldorsson B.V."/>
            <person name="Hannenhalli S."/>
            <person name="Turner R."/>
            <person name="Yooseph S."/>
            <person name="Lu F."/>
            <person name="Nusskern D.R."/>
            <person name="Shue B.C."/>
            <person name="Zheng X.H."/>
            <person name="Zhong F."/>
            <person name="Delcher A.L."/>
            <person name="Huson D.H."/>
            <person name="Kravitz S.A."/>
            <person name="Mouchard L."/>
            <person name="Reinert K."/>
            <person name="Remington K.A."/>
            <person name="Clark A.G."/>
            <person name="Waterman M.S."/>
            <person name="Eichler E.E."/>
            <person name="Adams M.D."/>
            <person name="Hunkapiller M.W."/>
            <person name="Myers E.W."/>
            <person name="Venter J.C."/>
        </authorList>
    </citation>
    <scope>NUCLEOTIDE SEQUENCE [LARGE SCALE GENOMIC DNA]</scope>
    <scope>VARIANT GLY-205</scope>
</reference>
<reference key="5">
    <citation type="journal article" date="2004" name="Genome Res.">
        <title>The status, quality, and expansion of the NIH full-length cDNA project: the Mammalian Gene Collection (MGC).</title>
        <authorList>
            <consortium name="The MGC Project Team"/>
        </authorList>
    </citation>
    <scope>NUCLEOTIDE SEQUENCE [LARGE SCALE MRNA] OF 247-791</scope>
    <source>
        <tissue>PNS</tissue>
    </source>
</reference>
<reference key="6">
    <citation type="journal article" date="2009" name="Sci. Signal.">
        <title>Quantitative phosphoproteomic analysis of T cell receptor signaling reveals system-wide modulation of protein-protein interactions.</title>
        <authorList>
            <person name="Mayya V."/>
            <person name="Lundgren D.H."/>
            <person name="Hwang S.-I."/>
            <person name="Rezaul K."/>
            <person name="Wu L."/>
            <person name="Eng J.K."/>
            <person name="Rodionov V."/>
            <person name="Han D.K."/>
        </authorList>
    </citation>
    <scope>IDENTIFICATION BY MASS SPECTROMETRY [LARGE SCALE ANALYSIS]</scope>
    <source>
        <tissue>Leukemic T-cell</tissue>
    </source>
</reference>
<reference key="7">
    <citation type="journal article" date="2012" name="Proc. Natl. Acad. Sci. U.S.A.">
        <title>N-terminal acetylome analyses and functional insights of the N-terminal acetyltransferase NatB.</title>
        <authorList>
            <person name="Van Damme P."/>
            <person name="Lasa M."/>
            <person name="Polevoda B."/>
            <person name="Gazquez C."/>
            <person name="Elosegui-Artola A."/>
            <person name="Kim D.S."/>
            <person name="De Juan-Pardo E."/>
            <person name="Demeyer K."/>
            <person name="Hole K."/>
            <person name="Larrea E."/>
            <person name="Timmerman E."/>
            <person name="Prieto J."/>
            <person name="Arnesen T."/>
            <person name="Sherman F."/>
            <person name="Gevaert K."/>
            <person name="Aldabe R."/>
        </authorList>
    </citation>
    <scope>ACETYLATION [LARGE SCALE ANALYSIS] AT ALA-2</scope>
    <scope>CLEAVAGE OF INITIATOR METHIONINE [LARGE SCALE ANALYSIS]</scope>
    <scope>IDENTIFICATION BY MASS SPECTROMETRY [LARGE SCALE ANALYSIS]</scope>
</reference>
<reference key="8">
    <citation type="journal article" date="2013" name="J. Proteome Res.">
        <title>Toward a comprehensive characterization of a human cancer cell phosphoproteome.</title>
        <authorList>
            <person name="Zhou H."/>
            <person name="Di Palma S."/>
            <person name="Preisinger C."/>
            <person name="Peng M."/>
            <person name="Polat A.N."/>
            <person name="Heck A.J."/>
            <person name="Mohammed S."/>
        </authorList>
    </citation>
    <scope>PHOSPHORYLATION [LARGE SCALE ANALYSIS] AT THR-10</scope>
    <scope>IDENTIFICATION BY MASS SPECTROMETRY [LARGE SCALE ANALYSIS]</scope>
    <source>
        <tissue>Cervix carcinoma</tissue>
        <tissue>Erythroleukemia</tissue>
    </source>
</reference>
<gene>
    <name type="primary">MFSD6</name>
    <name type="synonym">MMR2</name>
</gene>
<organism>
    <name type="scientific">Homo sapiens</name>
    <name type="common">Human</name>
    <dbReference type="NCBI Taxonomy" id="9606"/>
    <lineage>
        <taxon>Eukaryota</taxon>
        <taxon>Metazoa</taxon>
        <taxon>Chordata</taxon>
        <taxon>Craniata</taxon>
        <taxon>Vertebrata</taxon>
        <taxon>Euteleostomi</taxon>
        <taxon>Mammalia</taxon>
        <taxon>Eutheria</taxon>
        <taxon>Euarchontoglires</taxon>
        <taxon>Primates</taxon>
        <taxon>Haplorrhini</taxon>
        <taxon>Catarrhini</taxon>
        <taxon>Hominidae</taxon>
        <taxon>Homo</taxon>
    </lineage>
</organism>
<evidence type="ECO:0000255" key="1"/>
<evidence type="ECO:0000256" key="2">
    <source>
        <dbReference type="SAM" id="MobiDB-lite"/>
    </source>
</evidence>
<evidence type="ECO:0000269" key="3">
    <source>
    </source>
</evidence>
<evidence type="ECO:0000269" key="4">
    <source>
    </source>
</evidence>
<evidence type="ECO:0000269" key="5">
    <source ref="4"/>
</evidence>
<evidence type="ECO:0000305" key="6"/>
<evidence type="ECO:0007744" key="7">
    <source>
    </source>
</evidence>
<evidence type="ECO:0007744" key="8">
    <source>
    </source>
</evidence>
<proteinExistence type="evidence at protein level"/>
<dbReference type="EMBL" id="AB472299">
    <property type="protein sequence ID" value="BAI82196.1"/>
    <property type="molecule type" value="mRNA"/>
</dbReference>
<dbReference type="EMBL" id="AK000167">
    <property type="protein sequence ID" value="BAA90987.1"/>
    <property type="status" value="ALT_INIT"/>
    <property type="molecule type" value="mRNA"/>
</dbReference>
<dbReference type="EMBL" id="AK127176">
    <property type="protein sequence ID" value="BAC86869.1"/>
    <property type="molecule type" value="mRNA"/>
</dbReference>
<dbReference type="EMBL" id="AC093388">
    <property type="protein sequence ID" value="AAY24173.1"/>
    <property type="status" value="ALT_INIT"/>
    <property type="molecule type" value="Genomic_DNA"/>
</dbReference>
<dbReference type="EMBL" id="CH471058">
    <property type="protein sequence ID" value="EAX10868.1"/>
    <property type="status" value="ALT_INIT"/>
    <property type="molecule type" value="Genomic_DNA"/>
</dbReference>
<dbReference type="EMBL" id="CH471058">
    <property type="protein sequence ID" value="EAX10867.1"/>
    <property type="molecule type" value="Genomic_DNA"/>
</dbReference>
<dbReference type="EMBL" id="BC050537">
    <property type="protein sequence ID" value="AAH50537.2"/>
    <property type="molecule type" value="mRNA"/>
</dbReference>
<dbReference type="CCDS" id="CCDS2306.1"/>
<dbReference type="RefSeq" id="NP_001362915.1">
    <property type="nucleotide sequence ID" value="NM_001375986.1"/>
</dbReference>
<dbReference type="RefSeq" id="NP_001362916.1">
    <property type="nucleotide sequence ID" value="NM_001375987.1"/>
</dbReference>
<dbReference type="RefSeq" id="NP_001362917.1">
    <property type="nucleotide sequence ID" value="NM_001375988.1"/>
</dbReference>
<dbReference type="RefSeq" id="NP_060164.3">
    <property type="nucleotide sequence ID" value="NM_017694.3"/>
</dbReference>
<dbReference type="RefSeq" id="XP_005246711.1">
    <property type="nucleotide sequence ID" value="XM_005246654.2"/>
</dbReference>
<dbReference type="RefSeq" id="XP_011509670.1">
    <property type="nucleotide sequence ID" value="XM_011511368.1"/>
</dbReference>
<dbReference type="RefSeq" id="XP_047300780.1">
    <property type="nucleotide sequence ID" value="XM_047444824.1"/>
</dbReference>
<dbReference type="BioGRID" id="120193">
    <property type="interactions" value="41"/>
</dbReference>
<dbReference type="FunCoup" id="Q6ZSS7">
    <property type="interactions" value="1253"/>
</dbReference>
<dbReference type="IntAct" id="Q6ZSS7">
    <property type="interactions" value="41"/>
</dbReference>
<dbReference type="STRING" id="9606.ENSP00000376141"/>
<dbReference type="TCDB" id="2.A.1.65.13">
    <property type="family name" value="the major facilitator superfamily (mfs)"/>
</dbReference>
<dbReference type="GlyConnect" id="1484">
    <property type="glycosylation" value="1 N-Linked glycan (1 site)"/>
</dbReference>
<dbReference type="GlyCosmos" id="Q6ZSS7">
    <property type="glycosylation" value="1 site, 1 glycan"/>
</dbReference>
<dbReference type="GlyGen" id="Q6ZSS7">
    <property type="glycosylation" value="1 site, 2 N-linked glycans (1 site)"/>
</dbReference>
<dbReference type="iPTMnet" id="Q6ZSS7"/>
<dbReference type="PhosphoSitePlus" id="Q6ZSS7"/>
<dbReference type="SwissPalm" id="Q6ZSS7"/>
<dbReference type="BioMuta" id="MFSD6"/>
<dbReference type="DMDM" id="187610244"/>
<dbReference type="jPOST" id="Q6ZSS7"/>
<dbReference type="MassIVE" id="Q6ZSS7"/>
<dbReference type="PaxDb" id="9606-ENSP00000376141"/>
<dbReference type="PeptideAtlas" id="Q6ZSS7"/>
<dbReference type="ProteomicsDB" id="68237"/>
<dbReference type="Antibodypedia" id="19836">
    <property type="antibodies" value="102 antibodies from 21 providers"/>
</dbReference>
<dbReference type="DNASU" id="54842"/>
<dbReference type="Ensembl" id="ENST00000281416.11">
    <property type="protein sequence ID" value="ENSP00000281416.7"/>
    <property type="gene ID" value="ENSG00000151690.15"/>
</dbReference>
<dbReference type="Ensembl" id="ENST00000392328.6">
    <property type="protein sequence ID" value="ENSP00000376141.1"/>
    <property type="gene ID" value="ENSG00000151690.15"/>
</dbReference>
<dbReference type="GeneID" id="54842"/>
<dbReference type="KEGG" id="hsa:54842"/>
<dbReference type="MANE-Select" id="ENST00000392328.6">
    <property type="protein sequence ID" value="ENSP00000376141.1"/>
    <property type="RefSeq nucleotide sequence ID" value="NM_017694.4"/>
    <property type="RefSeq protein sequence ID" value="NP_060164.3"/>
</dbReference>
<dbReference type="UCSC" id="uc002urz.2">
    <property type="organism name" value="human"/>
</dbReference>
<dbReference type="AGR" id="HGNC:24711"/>
<dbReference type="CTD" id="54842"/>
<dbReference type="DisGeNET" id="54842"/>
<dbReference type="GeneCards" id="MFSD6"/>
<dbReference type="HGNC" id="HGNC:24711">
    <property type="gene designation" value="MFSD6"/>
</dbReference>
<dbReference type="HPA" id="ENSG00000151690">
    <property type="expression patterns" value="Low tissue specificity"/>
</dbReference>
<dbReference type="MIM" id="613476">
    <property type="type" value="gene"/>
</dbReference>
<dbReference type="neXtProt" id="NX_Q6ZSS7"/>
<dbReference type="OpenTargets" id="ENSG00000151690"/>
<dbReference type="PharmGKB" id="PA164722278"/>
<dbReference type="VEuPathDB" id="HostDB:ENSG00000151690"/>
<dbReference type="eggNOG" id="KOG3762">
    <property type="taxonomic scope" value="Eukaryota"/>
</dbReference>
<dbReference type="GeneTree" id="ENSGT00530000063599"/>
<dbReference type="HOGENOM" id="CLU_013133_2_0_1"/>
<dbReference type="InParanoid" id="Q6ZSS7"/>
<dbReference type="OMA" id="LMLLYHG"/>
<dbReference type="OrthoDB" id="5989317at2759"/>
<dbReference type="PAN-GO" id="Q6ZSS7">
    <property type="GO annotations" value="2 GO annotations based on evolutionary models"/>
</dbReference>
<dbReference type="PhylomeDB" id="Q6ZSS7"/>
<dbReference type="TreeFam" id="TF314366"/>
<dbReference type="PathwayCommons" id="Q6ZSS7"/>
<dbReference type="SignaLink" id="Q6ZSS7"/>
<dbReference type="BioGRID-ORCS" id="54842">
    <property type="hits" value="10 hits in 1154 CRISPR screens"/>
</dbReference>
<dbReference type="ChiTaRS" id="MFSD6">
    <property type="organism name" value="human"/>
</dbReference>
<dbReference type="GenomeRNAi" id="54842"/>
<dbReference type="Pharos" id="Q6ZSS7">
    <property type="development level" value="Tbio"/>
</dbReference>
<dbReference type="PRO" id="PR:Q6ZSS7"/>
<dbReference type="Proteomes" id="UP000005640">
    <property type="component" value="Chromosome 2"/>
</dbReference>
<dbReference type="RNAct" id="Q6ZSS7">
    <property type="molecule type" value="protein"/>
</dbReference>
<dbReference type="Bgee" id="ENSG00000151690">
    <property type="expression patterns" value="Expressed in substantia nigra pars reticulata and 181 other cell types or tissues"/>
</dbReference>
<dbReference type="ExpressionAtlas" id="Q6ZSS7">
    <property type="expression patterns" value="baseline and differential"/>
</dbReference>
<dbReference type="GO" id="GO:0016020">
    <property type="term" value="C:membrane"/>
    <property type="evidence" value="ECO:0007005"/>
    <property type="project" value="UniProtKB"/>
</dbReference>
<dbReference type="GO" id="GO:0005886">
    <property type="term" value="C:plasma membrane"/>
    <property type="evidence" value="ECO:0000318"/>
    <property type="project" value="GO_Central"/>
</dbReference>
<dbReference type="GO" id="GO:0042590">
    <property type="term" value="P:antigen processing and presentation of exogenous peptide antigen via MHC class I"/>
    <property type="evidence" value="ECO:0000318"/>
    <property type="project" value="GO_Central"/>
</dbReference>
<dbReference type="CDD" id="cd17335">
    <property type="entry name" value="MFS_MFSD6"/>
    <property type="match status" value="1"/>
</dbReference>
<dbReference type="FunFam" id="1.20.1250.20:FF:000136">
    <property type="entry name" value="Major facilitator superfamily domain-containing protein 6"/>
    <property type="match status" value="1"/>
</dbReference>
<dbReference type="FunFam" id="1.20.1250.20:FF:000229">
    <property type="entry name" value="Major facilitator superfamily domain-containing protein 6"/>
    <property type="match status" value="1"/>
</dbReference>
<dbReference type="FunFam" id="1.20.1250.20:FF:000275">
    <property type="entry name" value="Major facilitator superfamily domain-containing protein 6"/>
    <property type="match status" value="1"/>
</dbReference>
<dbReference type="Gene3D" id="1.20.1250.20">
    <property type="entry name" value="MFS general substrate transporter like domains"/>
    <property type="match status" value="3"/>
</dbReference>
<dbReference type="InterPro" id="IPR024989">
    <property type="entry name" value="MFS_assoc_dom"/>
</dbReference>
<dbReference type="InterPro" id="IPR051717">
    <property type="entry name" value="MFS_MFSD6"/>
</dbReference>
<dbReference type="InterPro" id="IPR036259">
    <property type="entry name" value="MFS_trans_sf"/>
</dbReference>
<dbReference type="PANTHER" id="PTHR16172:SF2">
    <property type="entry name" value="MAJOR FACILITATOR SUPERFAMILY DOMAIN-CONTAINING PROTEIN 6"/>
    <property type="match status" value="1"/>
</dbReference>
<dbReference type="PANTHER" id="PTHR16172">
    <property type="entry name" value="MAJOR FACILITATOR SUPERFAMILY DOMAIN-CONTAINING PROTEIN 6-LIKE"/>
    <property type="match status" value="1"/>
</dbReference>
<dbReference type="Pfam" id="PF12832">
    <property type="entry name" value="MFS_1_like"/>
    <property type="match status" value="1"/>
</dbReference>
<dbReference type="SUPFAM" id="SSF103473">
    <property type="entry name" value="MFS general substrate transporter"/>
    <property type="match status" value="1"/>
</dbReference>
<feature type="initiator methionine" description="Removed" evidence="7">
    <location>
        <position position="1"/>
    </location>
</feature>
<feature type="chain" id="PRO_0000321940" description="Major facilitator superfamily domain-containing protein 6">
    <location>
        <begin position="2"/>
        <end position="791"/>
    </location>
</feature>
<feature type="transmembrane region" description="Helical" evidence="1">
    <location>
        <begin position="73"/>
        <end position="93"/>
    </location>
</feature>
<feature type="transmembrane region" description="Helical" evidence="1">
    <location>
        <begin position="105"/>
        <end position="125"/>
    </location>
</feature>
<feature type="transmembrane region" description="Helical" evidence="1">
    <location>
        <begin position="132"/>
        <end position="152"/>
    </location>
</feature>
<feature type="transmembrane region" description="Helical" evidence="1">
    <location>
        <begin position="286"/>
        <end position="306"/>
    </location>
</feature>
<feature type="transmembrane region" description="Helical" evidence="1">
    <location>
        <begin position="335"/>
        <end position="355"/>
    </location>
</feature>
<feature type="transmembrane region" description="Helical" evidence="1">
    <location>
        <begin position="369"/>
        <end position="389"/>
    </location>
</feature>
<feature type="transmembrane region" description="Helical" evidence="1">
    <location>
        <begin position="450"/>
        <end position="470"/>
    </location>
</feature>
<feature type="transmembrane region" description="Helical" evidence="1">
    <location>
        <begin position="479"/>
        <end position="499"/>
    </location>
</feature>
<feature type="transmembrane region" description="Helical" evidence="1">
    <location>
        <begin position="507"/>
        <end position="527"/>
    </location>
</feature>
<feature type="transmembrane region" description="Helical" evidence="1">
    <location>
        <begin position="544"/>
        <end position="564"/>
    </location>
</feature>
<feature type="transmembrane region" description="Helical" evidence="1">
    <location>
        <begin position="579"/>
        <end position="599"/>
    </location>
</feature>
<feature type="transmembrane region" description="Helical" evidence="1">
    <location>
        <begin position="605"/>
        <end position="625"/>
    </location>
</feature>
<feature type="region of interest" description="Disordered" evidence="2">
    <location>
        <begin position="22"/>
        <end position="47"/>
    </location>
</feature>
<feature type="region of interest" description="Disordered" evidence="2">
    <location>
        <begin position="407"/>
        <end position="427"/>
    </location>
</feature>
<feature type="region of interest" description="Disordered" evidence="2">
    <location>
        <begin position="662"/>
        <end position="687"/>
    </location>
</feature>
<feature type="region of interest" description="Disordered" evidence="2">
    <location>
        <begin position="723"/>
        <end position="791"/>
    </location>
</feature>
<feature type="compositionally biased region" description="Low complexity" evidence="2">
    <location>
        <begin position="37"/>
        <end position="47"/>
    </location>
</feature>
<feature type="compositionally biased region" description="Low complexity" evidence="2">
    <location>
        <begin position="416"/>
        <end position="427"/>
    </location>
</feature>
<feature type="compositionally biased region" description="Polar residues" evidence="2">
    <location>
        <begin position="750"/>
        <end position="768"/>
    </location>
</feature>
<feature type="compositionally biased region" description="Low complexity" evidence="2">
    <location>
        <begin position="782"/>
        <end position="791"/>
    </location>
</feature>
<feature type="modified residue" description="N-acetylalanine" evidence="7">
    <location>
        <position position="2"/>
    </location>
</feature>
<feature type="modified residue" description="Phosphothreonine" evidence="8">
    <location>
        <position position="10"/>
    </location>
</feature>
<feature type="sequence variant" id="VAR_039388" description="In dbSNP:rs9646748." evidence="3 4 5">
    <original>R</original>
    <variation>G</variation>
    <location>
        <position position="205"/>
    </location>
</feature>
<feature type="sequence conflict" description="In Ref. 2; BAA90987." evidence="6" ref="2">
    <original>E</original>
    <variation>G</variation>
    <location>
        <position position="728"/>
    </location>
</feature>
<keyword id="KW-0007">Acetylation</keyword>
<keyword id="KW-0472">Membrane</keyword>
<keyword id="KW-0597">Phosphoprotein</keyword>
<keyword id="KW-1267">Proteomics identification</keyword>
<keyword id="KW-1185">Reference proteome</keyword>
<keyword id="KW-0812">Transmembrane</keyword>
<keyword id="KW-1133">Transmembrane helix</keyword>
<accession>Q6ZSS7</accession>
<accession>D3KSZ4</accession>
<accession>Q86TH2</accession>
<accession>Q9NXM3</accession>
<comment type="subunit">
    <text>May interact with HLA-B62.</text>
</comment>
<comment type="interaction">
    <interactant intactId="EBI-2858252">
        <id>Q6ZSS7</id>
    </interactant>
    <interactant intactId="EBI-10827839">
        <id>Q15848</id>
        <label>ADIPOQ</label>
    </interactant>
    <organismsDiffer>false</organismsDiffer>
    <experiments>3</experiments>
</comment>
<comment type="interaction">
    <interactant intactId="EBI-2858252">
        <id>Q6ZSS7</id>
    </interactant>
    <interactant intactId="EBI-3921603">
        <id>Q9BVK2</id>
        <label>ALG8</label>
    </interactant>
    <organismsDiffer>false</organismsDiffer>
    <experiments>3</experiments>
</comment>
<comment type="interaction">
    <interactant intactId="EBI-2858252">
        <id>Q6ZSS7</id>
    </interactant>
    <interactant intactId="EBI-2606935">
        <id>Q96BI3</id>
        <label>APH1A</label>
    </interactant>
    <organismsDiffer>false</organismsDiffer>
    <experiments>3</experiments>
</comment>
<comment type="interaction">
    <interactant intactId="EBI-2858252">
        <id>Q6ZSS7</id>
    </interactant>
    <interactant intactId="EBI-11976321">
        <id>O95236-2</id>
        <label>APOL3</label>
    </interactant>
    <organismsDiffer>false</organismsDiffer>
    <experiments>3</experiments>
</comment>
<comment type="interaction">
    <interactant intactId="EBI-2858252">
        <id>Q6ZSS7</id>
    </interactant>
    <interactant intactId="EBI-10489564">
        <id>Q6P5T0</id>
        <label>AQP7</label>
    </interactant>
    <organismsDiffer>false</organismsDiffer>
    <experiments>3</experiments>
</comment>
<comment type="interaction">
    <interactant intactId="EBI-2858252">
        <id>Q6ZSS7</id>
    </interactant>
    <interactant intactId="EBI-18323646">
        <id>Q8NEA5</id>
        <label>C19orf18</label>
    </interactant>
    <organismsDiffer>false</organismsDiffer>
    <experiments>3</experiments>
</comment>
<comment type="interaction">
    <interactant intactId="EBI-2858252">
        <id>Q6ZSS7</id>
    </interactant>
    <interactant intactId="EBI-7797864">
        <id>P11912</id>
        <label>CD79A</label>
    </interactant>
    <organismsDiffer>false</organismsDiffer>
    <experiments>3</experiments>
</comment>
<comment type="interaction">
    <interactant intactId="EBI-2858252">
        <id>Q6ZSS7</id>
    </interactant>
    <interactant intactId="EBI-1046040">
        <id>P00387</id>
        <label>CYB5R3</label>
    </interactant>
    <organismsDiffer>false</organismsDiffer>
    <experiments>3</experiments>
</comment>
<comment type="interaction">
    <interactant intactId="EBI-2858252">
        <id>Q6ZSS7</id>
    </interactant>
    <interactant intactId="EBI-3915253">
        <id>Q15125</id>
        <label>EBP</label>
    </interactant>
    <organismsDiffer>false</organismsDiffer>
    <experiments>3</experiments>
</comment>
<comment type="interaction">
    <interactant intactId="EBI-2858252">
        <id>Q6ZSS7</id>
    </interactant>
    <interactant intactId="EBI-781551">
        <id>Q9Y282</id>
        <label>ERGIC3</label>
    </interactant>
    <organismsDiffer>false</organismsDiffer>
    <experiments>3</experiments>
</comment>
<comment type="interaction">
    <interactant intactId="EBI-2858252">
        <id>Q6ZSS7</id>
    </interactant>
    <interactant intactId="EBI-17458373">
        <id>P48165</id>
        <label>GJA8</label>
    </interactant>
    <organismsDiffer>false</organismsDiffer>
    <experiments>3</experiments>
</comment>
<comment type="interaction">
    <interactant intactId="EBI-2858252">
        <id>Q6ZSS7</id>
    </interactant>
    <interactant intactId="EBI-3905204">
        <id>P29033</id>
        <label>GJB2</label>
    </interactant>
    <organismsDiffer>false</organismsDiffer>
    <experiments>3</experiments>
</comment>
<comment type="interaction">
    <interactant intactId="EBI-2858252">
        <id>Q6ZSS7</id>
    </interactant>
    <interactant intactId="EBI-13345167">
        <id>Q8TDT2</id>
        <label>GPR152</label>
    </interactant>
    <organismsDiffer>false</organismsDiffer>
    <experiments>3</experiments>
</comment>
<comment type="interaction">
    <interactant intactId="EBI-2858252">
        <id>Q6ZSS7</id>
    </interactant>
    <interactant intactId="EBI-18076404">
        <id>O15529</id>
        <label>GPR42</label>
    </interactant>
    <organismsDiffer>false</organismsDiffer>
    <experiments>3</experiments>
</comment>
<comment type="interaction">
    <interactant intactId="EBI-2858252">
        <id>Q6ZSS7</id>
    </interactant>
    <interactant intactId="EBI-11721746">
        <id>Q8TED1</id>
        <label>GPX8</label>
    </interactant>
    <organismsDiffer>false</organismsDiffer>
    <experiments>3</experiments>
</comment>
<comment type="interaction">
    <interactant intactId="EBI-2858252">
        <id>Q6ZSS7</id>
    </interactant>
    <interactant intactId="EBI-18234679">
        <id>Q16553</id>
        <label>LY6E</label>
    </interactant>
    <organismsDiffer>false</organismsDiffer>
    <experiments>3</experiments>
</comment>
<comment type="interaction">
    <interactant intactId="EBI-2858252">
        <id>Q6ZSS7</id>
    </interactant>
    <interactant intactId="EBI-11922631">
        <id>Q5TF39</id>
        <label>MFSD4B</label>
    </interactant>
    <organismsDiffer>false</organismsDiffer>
    <experiments>3</experiments>
</comment>
<comment type="interaction">
    <interactant intactId="EBI-2858252">
        <id>Q6ZSS7</id>
    </interactant>
    <interactant intactId="EBI-3919611">
        <id>Q16617</id>
        <label>NKG7</label>
    </interactant>
    <organismsDiffer>false</organismsDiffer>
    <experiments>3</experiments>
</comment>
<comment type="interaction">
    <interactant intactId="EBI-2858252">
        <id>Q6ZSS7</id>
    </interactant>
    <interactant intactId="EBI-16427978">
        <id>Q9BQ51</id>
        <label>PDCD1LG2</label>
    </interactant>
    <organismsDiffer>false</organismsDiffer>
    <experiments>3</experiments>
</comment>
<comment type="interaction">
    <interactant intactId="EBI-2858252">
        <id>Q6ZSS7</id>
    </interactant>
    <interactant intactId="EBI-10204280">
        <id>A0A0S2Z4U3</id>
        <label>SDC3</label>
    </interactant>
    <organismsDiffer>false</organismsDiffer>
    <experiments>3</experiments>
</comment>
<comment type="interaction">
    <interactant intactId="EBI-2858252">
        <id>Q6ZSS7</id>
    </interactant>
    <interactant intactId="EBI-9679163">
        <id>Q9Y6D0</id>
        <label>SELENOK</label>
    </interactant>
    <organismsDiffer>false</organismsDiffer>
    <experiments>3</experiments>
</comment>
<comment type="interaction">
    <interactant intactId="EBI-2858252">
        <id>Q6ZSS7</id>
    </interactant>
    <interactant intactId="EBI-1046170">
        <id>O95470</id>
        <label>SGPL1</label>
    </interactant>
    <organismsDiffer>false</organismsDiffer>
    <experiments>3</experiments>
</comment>
<comment type="interaction">
    <interactant intactId="EBI-2858252">
        <id>Q6ZSS7</id>
    </interactant>
    <interactant intactId="EBI-18037857">
        <id>Q3SXP7</id>
        <label>SHISAL1</label>
    </interactant>
    <organismsDiffer>false</organismsDiffer>
    <experiments>3</experiments>
</comment>
<comment type="interaction">
    <interactant intactId="EBI-2858252">
        <id>Q6ZSS7</id>
    </interactant>
    <interactant intactId="EBI-3923031">
        <id>Q14973</id>
        <label>SLC10A1</label>
    </interactant>
    <organismsDiffer>false</organismsDiffer>
    <experiments>3</experiments>
</comment>
<comment type="interaction">
    <interactant intactId="EBI-2858252">
        <id>Q6ZSS7</id>
    </interactant>
    <interactant intactId="EBI-18159983">
        <id>Q3KNW5</id>
        <label>SLC10A6</label>
    </interactant>
    <organismsDiffer>false</organismsDiffer>
    <experiments>3</experiments>
</comment>
<comment type="interaction">
    <interactant intactId="EBI-2858252">
        <id>Q6ZSS7</id>
    </interactant>
    <interactant intactId="EBI-17595455">
        <id>P54219-3</id>
        <label>SLC18A1</label>
    </interactant>
    <organismsDiffer>false</organismsDiffer>
    <experiments>3</experiments>
</comment>
<comment type="interaction">
    <interactant intactId="EBI-2858252">
        <id>Q6ZSS7</id>
    </interactant>
    <interactant intactId="EBI-12898013">
        <id>Q9NP94</id>
        <label>SLC39A2</label>
    </interactant>
    <organismsDiffer>false</organismsDiffer>
    <experiments>3</experiments>
</comment>
<comment type="interaction">
    <interactant intactId="EBI-2858252">
        <id>Q6ZSS7</id>
    </interactant>
    <interactant intactId="EBI-12188413">
        <id>B2RUZ4</id>
        <label>SMIM1</label>
    </interactant>
    <organismsDiffer>false</organismsDiffer>
    <experiments>3</experiments>
</comment>
<comment type="interaction">
    <interactant intactId="EBI-2858252">
        <id>Q6ZSS7</id>
    </interactant>
    <interactant intactId="EBI-17280858">
        <id>Q8WWF3</id>
        <label>SSMEM1</label>
    </interactant>
    <organismsDiffer>false</organismsDiffer>
    <experiments>3</experiments>
</comment>
<comment type="interaction">
    <interactant intactId="EBI-2858252">
        <id>Q6ZSS7</id>
    </interactant>
    <interactant intactId="EBI-2691717">
        <id>Q86Y82</id>
        <label>STX12</label>
    </interactant>
    <organismsDiffer>false</organismsDiffer>
    <experiments>3</experiments>
</comment>
<comment type="interaction">
    <interactant intactId="EBI-2858252">
        <id>Q6ZSS7</id>
    </interactant>
    <interactant intactId="EBI-726331">
        <id>Q9H7V2</id>
        <label>SYNDIG1</label>
    </interactant>
    <organismsDiffer>false</organismsDiffer>
    <experiments>3</experiments>
</comment>
<comment type="interaction">
    <interactant intactId="EBI-2858252">
        <id>Q6ZSS7</id>
    </interactant>
    <interactant intactId="EBI-11724423">
        <id>Q7Z7N9</id>
        <label>TMEM179B</label>
    </interactant>
    <organismsDiffer>false</organismsDiffer>
    <experiments>3</experiments>
</comment>
<comment type="interaction">
    <interactant intactId="EBI-2858252">
        <id>Q6ZSS7</id>
    </interactant>
    <interactant intactId="EBI-10982110">
        <id>Q96Q45-2</id>
        <label>TMEM237</label>
    </interactant>
    <organismsDiffer>false</organismsDiffer>
    <experiments>3</experiments>
</comment>
<comment type="interaction">
    <interactant intactId="EBI-2858252">
        <id>Q6ZSS7</id>
    </interactant>
    <interactant intactId="EBI-10315004">
        <id>Q9NWH2</id>
        <label>TMEM242</label>
    </interactant>
    <organismsDiffer>false</organismsDiffer>
    <experiments>3</experiments>
</comment>
<comment type="interaction">
    <interactant intactId="EBI-2858252">
        <id>Q6ZSS7</id>
    </interactant>
    <interactant intactId="EBI-12019210">
        <id>P61165</id>
        <label>TMEM258</label>
    </interactant>
    <organismsDiffer>false</organismsDiffer>
    <experiments>3</experiments>
</comment>
<comment type="interaction">
    <interactant intactId="EBI-2858252">
        <id>Q6ZSS7</id>
    </interactant>
    <interactant intactId="EBI-12345267">
        <id>O15393-2</id>
        <label>TMPRSS2</label>
    </interactant>
    <organismsDiffer>false</organismsDiffer>
    <experiments>3</experiments>
</comment>
<comment type="interaction">
    <interactant intactId="EBI-2858252">
        <id>Q6ZSS7</id>
    </interactant>
    <interactant intactId="EBI-12195249">
        <id>Q5TGU0</id>
        <label>TSPO2</label>
    </interactant>
    <organismsDiffer>false</organismsDiffer>
    <experiments>3</experiments>
</comment>
<comment type="subcellular location">
    <subcellularLocation>
        <location evidence="6">Membrane</location>
        <topology evidence="6">Multi-pass membrane protein</topology>
    </subcellularLocation>
</comment>
<comment type="tissue specificity">
    <text evidence="4">Widely expressed. Expression levels in peripheral blood mononuclear cells are highly variable between individuals, including no expression at all.</text>
</comment>
<comment type="similarity">
    <text evidence="6">Belongs to the major facilitator superfamily. MFSD6 family.</text>
</comment>
<comment type="sequence caution" evidence="6">
    <conflict type="erroneous initiation">
        <sequence resource="EMBL-CDS" id="AAY24173"/>
    </conflict>
    <text>Truncated N-terminus.</text>
</comment>
<comment type="sequence caution" evidence="6">
    <conflict type="erroneous initiation">
        <sequence resource="EMBL-CDS" id="BAA90987"/>
    </conflict>
    <text>Truncated N-terminus.</text>
</comment>
<comment type="sequence caution" evidence="6">
    <conflict type="erroneous initiation">
        <sequence resource="EMBL-CDS" id="EAX10868"/>
    </conflict>
    <text>Truncated N-terminus.</text>
</comment>
<name>MFSD6_HUMAN</name>
<protein>
    <recommendedName>
        <fullName>Major facilitator superfamily domain-containing protein 6</fullName>
    </recommendedName>
    <alternativeName>
        <fullName>Macrophage MHC class I receptor 2 homolog</fullName>
    </alternativeName>
</protein>
<sequence length="791" mass="88088">MADDKVAILTDDEEEQKRKYVLADPFNGISREPEPPSNETPSSTETSAIPEEEIDWIEKHCVKINNDLLISKVFYFFFYSAYGSLYPLLPVYYKQLGMSPSQSGLLVGIRYFIEFCSAPFWGVVADRFKKGKIVLLFSLLCWVLFNLGIGFVKPATLRCVPKIRPTTHPTNASHQLTILPTNSSFTSFLTISPKMREKRNLLETRLNVSDTVTLPTAPNMNSEPTLQPQTGEITNRMMDLTLNSSTATPVSPGSVTKETTTVIVTTTKSLPSDQVMLVYDQQEVEAIFLVILVVVIIGEFFSASSVTIVDTVTLQYLGKHRDRYGLQRMWGSLGWGLAMLSVGIGIDYTHIEVLIDGKGCKPPEYRNYQIVFIVFGVLMTMALIVATQFRFRYNHFKNDDSKGKEVEIPQVERNNSTESSEETPTTTSHSQAFNFWDLIKLLCSVQYGSVLFVAWFMGFGYGFVFTFLYWHLEDLNGTTTLFGVCSVLSHVSELTAYFFSHKLIELIGHIRVLYIGLACNTARYIYISYLENAWTVLPMEVLQGVTHAAIWAACISYLSAAVPPELRTSAQGILQGLHLGLGRGCGAMIGGVLVNYFGAAATFRGIGMACLVILLLFALIQWLAVPDEEEDKTMLAERIPVPSSPVPIATIDLVQQQTEDVMPRIEPRLPPKKTKHQEEQEDVNKPAWGVSSSPWVTFVYALYQIKEMMQLTRDNRASEIQPLQGTNENRENSPAGRAQPVPCETHSDPSRNQPSPDAAASQTQTSPAHPSVDPCTEESEEQQAQLAAGGH</sequence>